<geneLocation type="mitochondrion"/>
<dbReference type="EMBL" id="X61145">
    <property type="protein sequence ID" value="CAA43442.1"/>
    <property type="molecule type" value="Genomic_DNA"/>
</dbReference>
<dbReference type="PIR" id="F58850">
    <property type="entry name" value="F58850"/>
</dbReference>
<dbReference type="RefSeq" id="NP_006894.1">
    <property type="nucleotide sequence ID" value="NC_001321.1"/>
</dbReference>
<dbReference type="SMR" id="P24945"/>
<dbReference type="GeneID" id="807607"/>
<dbReference type="CTD" id="4508"/>
<dbReference type="GO" id="GO:0005743">
    <property type="term" value="C:mitochondrial inner membrane"/>
    <property type="evidence" value="ECO:0007669"/>
    <property type="project" value="UniProtKB-SubCell"/>
</dbReference>
<dbReference type="GO" id="GO:0045259">
    <property type="term" value="C:proton-transporting ATP synthase complex"/>
    <property type="evidence" value="ECO:0000250"/>
    <property type="project" value="UniProtKB"/>
</dbReference>
<dbReference type="GO" id="GO:0015252">
    <property type="term" value="F:proton channel activity"/>
    <property type="evidence" value="ECO:0000250"/>
    <property type="project" value="UniProtKB"/>
</dbReference>
<dbReference type="GO" id="GO:0046933">
    <property type="term" value="F:proton-transporting ATP synthase activity, rotational mechanism"/>
    <property type="evidence" value="ECO:0007669"/>
    <property type="project" value="TreeGrafter"/>
</dbReference>
<dbReference type="GO" id="GO:0015986">
    <property type="term" value="P:proton motive force-driven ATP synthesis"/>
    <property type="evidence" value="ECO:0000250"/>
    <property type="project" value="UniProtKB"/>
</dbReference>
<dbReference type="GO" id="GO:1902600">
    <property type="term" value="P:proton transmembrane transport"/>
    <property type="evidence" value="ECO:0000250"/>
    <property type="project" value="UniProtKB"/>
</dbReference>
<dbReference type="CDD" id="cd00310">
    <property type="entry name" value="ATP-synt_Fo_a_6"/>
    <property type="match status" value="1"/>
</dbReference>
<dbReference type="FunFam" id="1.20.120.220:FF:000004">
    <property type="entry name" value="ATP synthase subunit a"/>
    <property type="match status" value="1"/>
</dbReference>
<dbReference type="Gene3D" id="1.20.120.220">
    <property type="entry name" value="ATP synthase, F0 complex, subunit A"/>
    <property type="match status" value="1"/>
</dbReference>
<dbReference type="InterPro" id="IPR000568">
    <property type="entry name" value="ATP_synth_F0_asu"/>
</dbReference>
<dbReference type="InterPro" id="IPR023011">
    <property type="entry name" value="ATP_synth_F0_asu_AS"/>
</dbReference>
<dbReference type="InterPro" id="IPR045083">
    <property type="entry name" value="ATP_synth_F0_asu_bact/mt"/>
</dbReference>
<dbReference type="InterPro" id="IPR035908">
    <property type="entry name" value="F0_ATP_A_sf"/>
</dbReference>
<dbReference type="NCBIfam" id="TIGR01131">
    <property type="entry name" value="ATP_synt_6_or_A"/>
    <property type="match status" value="1"/>
</dbReference>
<dbReference type="PANTHER" id="PTHR11410">
    <property type="entry name" value="ATP SYNTHASE SUBUNIT A"/>
    <property type="match status" value="1"/>
</dbReference>
<dbReference type="PANTHER" id="PTHR11410:SF0">
    <property type="entry name" value="ATP SYNTHASE SUBUNIT A"/>
    <property type="match status" value="1"/>
</dbReference>
<dbReference type="Pfam" id="PF00119">
    <property type="entry name" value="ATP-synt_A"/>
    <property type="match status" value="1"/>
</dbReference>
<dbReference type="PRINTS" id="PR00123">
    <property type="entry name" value="ATPASEA"/>
</dbReference>
<dbReference type="SUPFAM" id="SSF81336">
    <property type="entry name" value="F1F0 ATP synthase subunit A"/>
    <property type="match status" value="1"/>
</dbReference>
<dbReference type="PROSITE" id="PS00449">
    <property type="entry name" value="ATPASE_A"/>
    <property type="match status" value="1"/>
</dbReference>
<reference key="1">
    <citation type="journal article" date="1991" name="J. Mol. Evol.">
        <title>The complete nucleotide sequence of the mitochondrial DNA of the fin whale, Balaenoptera physalus.</title>
        <authorList>
            <person name="Arnason U."/>
            <person name="Gullberg A."/>
            <person name="Widegren B."/>
        </authorList>
    </citation>
    <scope>NUCLEOTIDE SEQUENCE [GENOMIC DNA]</scope>
    <source>
        <strain>Isolate No. 27 / Anno 1987</strain>
        <tissue>Liver</tissue>
    </source>
</reference>
<protein>
    <recommendedName>
        <fullName evidence="1">ATP synthase F(0) complex subunit a</fullName>
    </recommendedName>
    <alternativeName>
        <fullName>F-ATPase protein 6</fullName>
    </alternativeName>
    <alternativeName>
        <fullName evidence="1">Proton-conducting channel, ATP synthase F(0) complex subunit a</fullName>
    </alternativeName>
</protein>
<gene>
    <name evidence="1" type="primary">MT-ATP6</name>
    <name type="synonym">ATP6</name>
    <name type="synonym">ATPASE6</name>
    <name type="synonym">MTATP6</name>
</gene>
<keyword id="KW-0066">ATP synthesis</keyword>
<keyword id="KW-0138">CF(0)</keyword>
<keyword id="KW-0375">Hydrogen ion transport</keyword>
<keyword id="KW-0406">Ion transport</keyword>
<keyword id="KW-0472">Membrane</keyword>
<keyword id="KW-0496">Mitochondrion</keyword>
<keyword id="KW-0999">Mitochondrion inner membrane</keyword>
<keyword id="KW-0812">Transmembrane</keyword>
<keyword id="KW-1133">Transmembrane helix</keyword>
<keyword id="KW-0813">Transport</keyword>
<proteinExistence type="inferred from homology"/>
<sequence length="226" mass="25072">MNENLFAPFMIPVMLGIPITTLIIILPSMLFPAPNRLINNRTIAIQQWLTKLTSKQLMNVHSPKGQTWSLMLISLFLFIASTNLLGMLPHSFTPTTQLSMNVGMAIPLWAGTVTTGFRNKTKMSLAHLLPQGTPTFLIPMLVIIETISLFIQPVAWAVRLTANITAGHLLMHLIGETTLALMNINLFSAFITFTILALLTILEFAVALIQAYVFTLLVSLYLHDNT</sequence>
<feature type="chain" id="PRO_0000082093" description="ATP synthase F(0) complex subunit a">
    <location>
        <begin position="1"/>
        <end position="226"/>
    </location>
</feature>
<feature type="transmembrane region" description="Helical" evidence="2">
    <location>
        <begin position="5"/>
        <end position="25"/>
    </location>
</feature>
<feature type="transmembrane region" description="Helical" evidence="2">
    <location>
        <begin position="68"/>
        <end position="88"/>
    </location>
</feature>
<feature type="transmembrane region" description="Helical" evidence="2">
    <location>
        <begin position="97"/>
        <end position="117"/>
    </location>
</feature>
<feature type="transmembrane region" description="Helical" evidence="2">
    <location>
        <begin position="136"/>
        <end position="156"/>
    </location>
</feature>
<feature type="transmembrane region" description="Helical" evidence="2">
    <location>
        <begin position="189"/>
        <end position="209"/>
    </location>
</feature>
<organism>
    <name type="scientific">Balaenoptera physalus</name>
    <name type="common">Fin whale</name>
    <name type="synonym">Balaena physalus</name>
    <dbReference type="NCBI Taxonomy" id="9770"/>
    <lineage>
        <taxon>Eukaryota</taxon>
        <taxon>Metazoa</taxon>
        <taxon>Chordata</taxon>
        <taxon>Craniata</taxon>
        <taxon>Vertebrata</taxon>
        <taxon>Euteleostomi</taxon>
        <taxon>Mammalia</taxon>
        <taxon>Eutheria</taxon>
        <taxon>Laurasiatheria</taxon>
        <taxon>Artiodactyla</taxon>
        <taxon>Whippomorpha</taxon>
        <taxon>Cetacea</taxon>
        <taxon>Mysticeti</taxon>
        <taxon>Balaenopteridae</taxon>
        <taxon>Balaenoptera</taxon>
    </lineage>
</organism>
<comment type="function">
    <text evidence="1">Subunit a, of the mitochondrial membrane ATP synthase complex (F(1)F(0) ATP synthase or Complex V) that produces ATP from ADP in the presence of a proton gradient across the membrane which is generated by electron transport complexes of the respiratory chain. ATP synthase complex consist of a soluble F(1) head domain - the catalytic core - and a membrane F(1) domain - the membrane proton channel. These two domains are linked by a central stalk rotating inside the F(1) region and a stationary peripheral stalk. During catalysis, ATP synthesis in the catalytic domain of F(1) is coupled via a rotary mechanism of the central stalk subunits to proton translocation. With the subunit c (ATP5MC1), forms the proton-conducting channel in the F(0) domain, that contains two crucial half-channels (inlet and outlet) that facilitate proton movement from the mitochondrial intermembrane space (IMS) into the matrix. Protons are taken up via the inlet half-channel and released through the outlet half-channel, following a Grotthuss mechanism.</text>
</comment>
<comment type="catalytic activity">
    <reaction evidence="1">
        <text>H(+)(in) = H(+)(out)</text>
        <dbReference type="Rhea" id="RHEA:34979"/>
        <dbReference type="ChEBI" id="CHEBI:15378"/>
    </reaction>
</comment>
<comment type="subunit">
    <text evidence="1">Component of the ATP synthase complex composed at least of ATP5F1A/subunit alpha, ATP5F1B/subunit beta, ATP5MC1/subunit c (homooctomer), MT-ATP6/subunit a, MT-ATP8/subunit 8, ATP5ME/subunit e, ATP5MF/subunit f, ATP5MG/subunit g, ATP5MK/subunit k, ATP5MJ/subunit j, ATP5F1C/subunit gamma, ATP5F1D/subunit delta, ATP5F1E/subunit epsilon, ATP5PF/subunit F6, ATP5PB/subunit b, ATP5PD/subunit d, ATP5PO/subunit OSCP. ATP synthase complex consists of a soluble F(1) head domain (subunits alpha(3) and beta(3)) - the catalytic core - and a membrane F(0) domain - the membrane proton channel (subunits c, a, 8, e, f, g, k and j). These two domains are linked by a central stalk (subunits gamma, delta, and epsilon) rotating inside the F1 region and a stationary peripheral stalk (subunits F6, b, d, and OSCP). Interacts with DNAJC30; interaction is direct.</text>
</comment>
<comment type="subcellular location">
    <subcellularLocation>
        <location>Mitochondrion inner membrane</location>
        <topology>Multi-pass membrane protein</topology>
    </subcellularLocation>
</comment>
<comment type="similarity">
    <text evidence="3">Belongs to the ATPase A chain family.</text>
</comment>
<accession>P24945</accession>
<evidence type="ECO:0000250" key="1">
    <source>
        <dbReference type="UniProtKB" id="P00846"/>
    </source>
</evidence>
<evidence type="ECO:0000255" key="2"/>
<evidence type="ECO:0000305" key="3"/>
<name>ATP6_BALPH</name>